<comment type="function">
    <text evidence="1">Regulates arginine biosynthesis genes.</text>
</comment>
<comment type="pathway">
    <text>Amino-acid biosynthesis; L-arginine biosynthesis [regulation].</text>
</comment>
<comment type="subcellular location">
    <subcellularLocation>
        <location evidence="1">Cytoplasm</location>
    </subcellularLocation>
</comment>
<comment type="similarity">
    <text evidence="1">Belongs to the ArgR family.</text>
</comment>
<organism>
    <name type="scientific">Clostridium kluyveri (strain NBRC 12016)</name>
    <dbReference type="NCBI Taxonomy" id="583346"/>
    <lineage>
        <taxon>Bacteria</taxon>
        <taxon>Bacillati</taxon>
        <taxon>Bacillota</taxon>
        <taxon>Clostridia</taxon>
        <taxon>Eubacteriales</taxon>
        <taxon>Clostridiaceae</taxon>
        <taxon>Clostridium</taxon>
    </lineage>
</organism>
<sequence>MKVTRHAKILEIINSNNIETQEELAEKLKNSGMNVTQATVSRDIKELKLIKVLSDNGRYKYATISRTESFLSNKLVNIFSQTVVSVENIDNFVVIKTISGSASAAAEAIDSLGFIGIAGTIAGDNTIFVMARDREKAHGITQKMKKMISQ</sequence>
<name>ARGR_CLOK1</name>
<proteinExistence type="inferred from homology"/>
<dbReference type="EMBL" id="AP009049">
    <property type="protein sequence ID" value="BAH06182.1"/>
    <property type="molecule type" value="Genomic_DNA"/>
</dbReference>
<dbReference type="RefSeq" id="WP_012101620.1">
    <property type="nucleotide sequence ID" value="NC_011837.1"/>
</dbReference>
<dbReference type="SMR" id="B9E107"/>
<dbReference type="KEGG" id="ckr:CKR_1131"/>
<dbReference type="HOGENOM" id="CLU_097103_3_0_9"/>
<dbReference type="UniPathway" id="UPA00068"/>
<dbReference type="Proteomes" id="UP000007969">
    <property type="component" value="Chromosome"/>
</dbReference>
<dbReference type="GO" id="GO:0005737">
    <property type="term" value="C:cytoplasm"/>
    <property type="evidence" value="ECO:0007669"/>
    <property type="project" value="UniProtKB-SubCell"/>
</dbReference>
<dbReference type="GO" id="GO:0034618">
    <property type="term" value="F:arginine binding"/>
    <property type="evidence" value="ECO:0007669"/>
    <property type="project" value="InterPro"/>
</dbReference>
<dbReference type="GO" id="GO:0003677">
    <property type="term" value="F:DNA binding"/>
    <property type="evidence" value="ECO:0007669"/>
    <property type="project" value="UniProtKB-KW"/>
</dbReference>
<dbReference type="GO" id="GO:0003700">
    <property type="term" value="F:DNA-binding transcription factor activity"/>
    <property type="evidence" value="ECO:0007669"/>
    <property type="project" value="UniProtKB-UniRule"/>
</dbReference>
<dbReference type="GO" id="GO:0006526">
    <property type="term" value="P:L-arginine biosynthetic process"/>
    <property type="evidence" value="ECO:0007669"/>
    <property type="project" value="UniProtKB-UniPathway"/>
</dbReference>
<dbReference type="GO" id="GO:0051259">
    <property type="term" value="P:protein complex oligomerization"/>
    <property type="evidence" value="ECO:0007669"/>
    <property type="project" value="InterPro"/>
</dbReference>
<dbReference type="GO" id="GO:1900079">
    <property type="term" value="P:regulation of arginine biosynthetic process"/>
    <property type="evidence" value="ECO:0007669"/>
    <property type="project" value="UniProtKB-UniRule"/>
</dbReference>
<dbReference type="Gene3D" id="3.30.1360.40">
    <property type="match status" value="1"/>
</dbReference>
<dbReference type="Gene3D" id="1.10.10.10">
    <property type="entry name" value="Winged helix-like DNA-binding domain superfamily/Winged helix DNA-binding domain"/>
    <property type="match status" value="1"/>
</dbReference>
<dbReference type="HAMAP" id="MF_00173">
    <property type="entry name" value="Arg_repressor"/>
    <property type="match status" value="1"/>
</dbReference>
<dbReference type="InterPro" id="IPR001669">
    <property type="entry name" value="Arg_repress"/>
</dbReference>
<dbReference type="InterPro" id="IPR020899">
    <property type="entry name" value="Arg_repress_C"/>
</dbReference>
<dbReference type="InterPro" id="IPR036251">
    <property type="entry name" value="Arg_repress_C_sf"/>
</dbReference>
<dbReference type="InterPro" id="IPR020900">
    <property type="entry name" value="Arg_repress_DNA-bd"/>
</dbReference>
<dbReference type="InterPro" id="IPR036388">
    <property type="entry name" value="WH-like_DNA-bd_sf"/>
</dbReference>
<dbReference type="InterPro" id="IPR036390">
    <property type="entry name" value="WH_DNA-bd_sf"/>
</dbReference>
<dbReference type="NCBIfam" id="TIGR01529">
    <property type="entry name" value="argR_whole"/>
    <property type="match status" value="1"/>
</dbReference>
<dbReference type="NCBIfam" id="NF001680">
    <property type="entry name" value="PRK00441.1"/>
    <property type="match status" value="1"/>
</dbReference>
<dbReference type="PANTHER" id="PTHR34471">
    <property type="entry name" value="ARGININE REPRESSOR"/>
    <property type="match status" value="1"/>
</dbReference>
<dbReference type="PANTHER" id="PTHR34471:SF1">
    <property type="entry name" value="ARGININE REPRESSOR"/>
    <property type="match status" value="1"/>
</dbReference>
<dbReference type="Pfam" id="PF01316">
    <property type="entry name" value="Arg_repressor"/>
    <property type="match status" value="1"/>
</dbReference>
<dbReference type="Pfam" id="PF02863">
    <property type="entry name" value="Arg_repressor_C"/>
    <property type="match status" value="1"/>
</dbReference>
<dbReference type="PRINTS" id="PR01467">
    <property type="entry name" value="ARGREPRESSOR"/>
</dbReference>
<dbReference type="SUPFAM" id="SSF55252">
    <property type="entry name" value="C-terminal domain of arginine repressor"/>
    <property type="match status" value="1"/>
</dbReference>
<dbReference type="SUPFAM" id="SSF46785">
    <property type="entry name" value="Winged helix' DNA-binding domain"/>
    <property type="match status" value="1"/>
</dbReference>
<protein>
    <recommendedName>
        <fullName evidence="1">Arginine repressor</fullName>
    </recommendedName>
</protein>
<feature type="chain" id="PRO_1000123791" description="Arginine repressor">
    <location>
        <begin position="1"/>
        <end position="150"/>
    </location>
</feature>
<accession>B9E107</accession>
<keyword id="KW-0028">Amino-acid biosynthesis</keyword>
<keyword id="KW-0055">Arginine biosynthesis</keyword>
<keyword id="KW-0963">Cytoplasm</keyword>
<keyword id="KW-0238">DNA-binding</keyword>
<keyword id="KW-0678">Repressor</keyword>
<keyword id="KW-0804">Transcription</keyword>
<keyword id="KW-0805">Transcription regulation</keyword>
<reference key="1">
    <citation type="submission" date="2005-09" db="EMBL/GenBank/DDBJ databases">
        <title>Complete genome sequence of Clostridium kluyveri and comparative genomics of Clostridia species.</title>
        <authorList>
            <person name="Inui M."/>
            <person name="Nonaka H."/>
            <person name="Shinoda Y."/>
            <person name="Ikenaga Y."/>
            <person name="Abe M."/>
            <person name="Naito K."/>
            <person name="Vertes A.A."/>
            <person name="Yukawa H."/>
        </authorList>
    </citation>
    <scope>NUCLEOTIDE SEQUENCE [LARGE SCALE GENOMIC DNA]</scope>
    <source>
        <strain>NBRC 12016</strain>
    </source>
</reference>
<gene>
    <name evidence="1" type="primary">argR</name>
    <name type="ordered locus">CKR_1131</name>
</gene>
<evidence type="ECO:0000255" key="1">
    <source>
        <dbReference type="HAMAP-Rule" id="MF_00173"/>
    </source>
</evidence>